<dbReference type="EC" id="5.3.1.1" evidence="1"/>
<dbReference type="EMBL" id="CP000721">
    <property type="protein sequence ID" value="ABR32786.1"/>
    <property type="molecule type" value="Genomic_DNA"/>
</dbReference>
<dbReference type="RefSeq" id="WP_011967947.1">
    <property type="nucleotide sequence ID" value="NC_009617.1"/>
</dbReference>
<dbReference type="SMR" id="A6LR06"/>
<dbReference type="GeneID" id="66343504"/>
<dbReference type="KEGG" id="cbe:Cbei_0599"/>
<dbReference type="eggNOG" id="COG0149">
    <property type="taxonomic scope" value="Bacteria"/>
</dbReference>
<dbReference type="HOGENOM" id="CLU_024251_2_3_9"/>
<dbReference type="UniPathway" id="UPA00109">
    <property type="reaction ID" value="UER00189"/>
</dbReference>
<dbReference type="UniPathway" id="UPA00138"/>
<dbReference type="Proteomes" id="UP000000565">
    <property type="component" value="Chromosome"/>
</dbReference>
<dbReference type="GO" id="GO:0005829">
    <property type="term" value="C:cytosol"/>
    <property type="evidence" value="ECO:0007669"/>
    <property type="project" value="TreeGrafter"/>
</dbReference>
<dbReference type="GO" id="GO:0004807">
    <property type="term" value="F:triose-phosphate isomerase activity"/>
    <property type="evidence" value="ECO:0007669"/>
    <property type="project" value="UniProtKB-UniRule"/>
</dbReference>
<dbReference type="GO" id="GO:0006094">
    <property type="term" value="P:gluconeogenesis"/>
    <property type="evidence" value="ECO:0007669"/>
    <property type="project" value="UniProtKB-UniRule"/>
</dbReference>
<dbReference type="GO" id="GO:0046166">
    <property type="term" value="P:glyceraldehyde-3-phosphate biosynthetic process"/>
    <property type="evidence" value="ECO:0007669"/>
    <property type="project" value="TreeGrafter"/>
</dbReference>
<dbReference type="GO" id="GO:0019563">
    <property type="term" value="P:glycerol catabolic process"/>
    <property type="evidence" value="ECO:0007669"/>
    <property type="project" value="TreeGrafter"/>
</dbReference>
<dbReference type="GO" id="GO:0006096">
    <property type="term" value="P:glycolytic process"/>
    <property type="evidence" value="ECO:0007669"/>
    <property type="project" value="UniProtKB-UniRule"/>
</dbReference>
<dbReference type="CDD" id="cd00311">
    <property type="entry name" value="TIM"/>
    <property type="match status" value="1"/>
</dbReference>
<dbReference type="FunFam" id="3.20.20.70:FF:000016">
    <property type="entry name" value="Triosephosphate isomerase"/>
    <property type="match status" value="1"/>
</dbReference>
<dbReference type="Gene3D" id="3.20.20.70">
    <property type="entry name" value="Aldolase class I"/>
    <property type="match status" value="1"/>
</dbReference>
<dbReference type="HAMAP" id="MF_00147_B">
    <property type="entry name" value="TIM_B"/>
    <property type="match status" value="1"/>
</dbReference>
<dbReference type="InterPro" id="IPR013785">
    <property type="entry name" value="Aldolase_TIM"/>
</dbReference>
<dbReference type="InterPro" id="IPR035990">
    <property type="entry name" value="TIM_sf"/>
</dbReference>
<dbReference type="InterPro" id="IPR022896">
    <property type="entry name" value="TrioseP_Isoase_bac/euk"/>
</dbReference>
<dbReference type="InterPro" id="IPR000652">
    <property type="entry name" value="Triosephosphate_isomerase"/>
</dbReference>
<dbReference type="InterPro" id="IPR020861">
    <property type="entry name" value="Triosephosphate_isomerase_AS"/>
</dbReference>
<dbReference type="NCBIfam" id="TIGR00419">
    <property type="entry name" value="tim"/>
    <property type="match status" value="1"/>
</dbReference>
<dbReference type="PANTHER" id="PTHR21139">
    <property type="entry name" value="TRIOSEPHOSPHATE ISOMERASE"/>
    <property type="match status" value="1"/>
</dbReference>
<dbReference type="PANTHER" id="PTHR21139:SF42">
    <property type="entry name" value="TRIOSEPHOSPHATE ISOMERASE"/>
    <property type="match status" value="1"/>
</dbReference>
<dbReference type="Pfam" id="PF00121">
    <property type="entry name" value="TIM"/>
    <property type="match status" value="1"/>
</dbReference>
<dbReference type="SUPFAM" id="SSF51351">
    <property type="entry name" value="Triosephosphate isomerase (TIM)"/>
    <property type="match status" value="1"/>
</dbReference>
<dbReference type="PROSITE" id="PS00171">
    <property type="entry name" value="TIM_1"/>
    <property type="match status" value="1"/>
</dbReference>
<dbReference type="PROSITE" id="PS51440">
    <property type="entry name" value="TIM_2"/>
    <property type="match status" value="1"/>
</dbReference>
<reference key="1">
    <citation type="submission" date="2007-06" db="EMBL/GenBank/DDBJ databases">
        <title>Complete sequence of Clostridium beijerinckii NCIMB 8052.</title>
        <authorList>
            <consortium name="US DOE Joint Genome Institute"/>
            <person name="Copeland A."/>
            <person name="Lucas S."/>
            <person name="Lapidus A."/>
            <person name="Barry K."/>
            <person name="Detter J.C."/>
            <person name="Glavina del Rio T."/>
            <person name="Hammon N."/>
            <person name="Israni S."/>
            <person name="Dalin E."/>
            <person name="Tice H."/>
            <person name="Pitluck S."/>
            <person name="Sims D."/>
            <person name="Brettin T."/>
            <person name="Bruce D."/>
            <person name="Tapia R."/>
            <person name="Brainard J."/>
            <person name="Schmutz J."/>
            <person name="Larimer F."/>
            <person name="Land M."/>
            <person name="Hauser L."/>
            <person name="Kyrpides N."/>
            <person name="Mikhailova N."/>
            <person name="Bennet G."/>
            <person name="Cann I."/>
            <person name="Chen J.-S."/>
            <person name="Contreras A.L."/>
            <person name="Jones D."/>
            <person name="Kashket E."/>
            <person name="Mitchell W."/>
            <person name="Stoddard S."/>
            <person name="Schwarz W."/>
            <person name="Qureshi N."/>
            <person name="Young M."/>
            <person name="Shi Z."/>
            <person name="Ezeji T."/>
            <person name="White B."/>
            <person name="Blaschek H."/>
            <person name="Richardson P."/>
        </authorList>
    </citation>
    <scope>NUCLEOTIDE SEQUENCE [LARGE SCALE GENOMIC DNA]</scope>
    <source>
        <strain>ATCC 51743 / NCIMB 8052</strain>
    </source>
</reference>
<sequence length="248" mass="26894">MRKAIIAGNWKMNKTIDEAVKMVEELKPLVKDATCDVVVCPTFVCLDAVKKAVAGSNIKVAAQNMHFEESGAFTGEVAPGMLEAMGIDYVVLGHSERREYFNETDEALNKKVKKAFEHNITPILCCGESLEQRENGTTNKVIEAQIKADIAGLTNEQVEKLVIAYEPIWAIGTGKTATDEQANETIKAIRAMVAEMYGSESAEKTRIQYGGSVKPNTIKAQMEMSDIDGALVGGASLVPADFAAIVNY</sequence>
<evidence type="ECO:0000255" key="1">
    <source>
        <dbReference type="HAMAP-Rule" id="MF_00147"/>
    </source>
</evidence>
<comment type="function">
    <text evidence="1">Involved in the gluconeogenesis. Catalyzes stereospecifically the conversion of dihydroxyacetone phosphate (DHAP) to D-glyceraldehyde-3-phosphate (G3P).</text>
</comment>
<comment type="catalytic activity">
    <reaction evidence="1">
        <text>D-glyceraldehyde 3-phosphate = dihydroxyacetone phosphate</text>
        <dbReference type="Rhea" id="RHEA:18585"/>
        <dbReference type="ChEBI" id="CHEBI:57642"/>
        <dbReference type="ChEBI" id="CHEBI:59776"/>
        <dbReference type="EC" id="5.3.1.1"/>
    </reaction>
</comment>
<comment type="pathway">
    <text evidence="1">Carbohydrate biosynthesis; gluconeogenesis.</text>
</comment>
<comment type="pathway">
    <text evidence="1">Carbohydrate degradation; glycolysis; D-glyceraldehyde 3-phosphate from glycerone phosphate: step 1/1.</text>
</comment>
<comment type="subunit">
    <text evidence="1">Homodimer.</text>
</comment>
<comment type="subcellular location">
    <subcellularLocation>
        <location evidence="1">Cytoplasm</location>
    </subcellularLocation>
</comment>
<comment type="similarity">
    <text evidence="1">Belongs to the triosephosphate isomerase family.</text>
</comment>
<organism>
    <name type="scientific">Clostridium beijerinckii (strain ATCC 51743 / NCIMB 8052)</name>
    <name type="common">Clostridium acetobutylicum</name>
    <dbReference type="NCBI Taxonomy" id="290402"/>
    <lineage>
        <taxon>Bacteria</taxon>
        <taxon>Bacillati</taxon>
        <taxon>Bacillota</taxon>
        <taxon>Clostridia</taxon>
        <taxon>Eubacteriales</taxon>
        <taxon>Clostridiaceae</taxon>
        <taxon>Clostridium</taxon>
    </lineage>
</organism>
<protein>
    <recommendedName>
        <fullName evidence="1">Triosephosphate isomerase</fullName>
        <shortName evidence="1">TIM</shortName>
        <shortName evidence="1">TPI</shortName>
        <ecNumber evidence="1">5.3.1.1</ecNumber>
    </recommendedName>
    <alternativeName>
        <fullName evidence="1">Triose-phosphate isomerase</fullName>
    </alternativeName>
</protein>
<proteinExistence type="inferred from homology"/>
<accession>A6LR06</accession>
<gene>
    <name evidence="1" type="primary">tpiA</name>
    <name type="ordered locus">Cbei_0599</name>
</gene>
<keyword id="KW-0963">Cytoplasm</keyword>
<keyword id="KW-0312">Gluconeogenesis</keyword>
<keyword id="KW-0324">Glycolysis</keyword>
<keyword id="KW-0413">Isomerase</keyword>
<name>TPIS_CLOB8</name>
<feature type="chain" id="PRO_1000076637" description="Triosephosphate isomerase">
    <location>
        <begin position="1"/>
        <end position="248"/>
    </location>
</feature>
<feature type="active site" description="Electrophile" evidence="1">
    <location>
        <position position="94"/>
    </location>
</feature>
<feature type="active site" description="Proton acceptor" evidence="1">
    <location>
        <position position="166"/>
    </location>
</feature>
<feature type="binding site" evidence="1">
    <location>
        <begin position="9"/>
        <end position="11"/>
    </location>
    <ligand>
        <name>substrate</name>
    </ligand>
</feature>
<feature type="binding site" evidence="1">
    <location>
        <position position="172"/>
    </location>
    <ligand>
        <name>substrate</name>
    </ligand>
</feature>
<feature type="binding site" evidence="1">
    <location>
        <position position="212"/>
    </location>
    <ligand>
        <name>substrate</name>
    </ligand>
</feature>
<feature type="binding site" evidence="1">
    <location>
        <begin position="233"/>
        <end position="234"/>
    </location>
    <ligand>
        <name>substrate</name>
    </ligand>
</feature>